<organism>
    <name type="scientific">Clostridioides difficile (strain 630)</name>
    <name type="common">Peptoclostridium difficile</name>
    <dbReference type="NCBI Taxonomy" id="272563"/>
    <lineage>
        <taxon>Bacteria</taxon>
        <taxon>Bacillati</taxon>
        <taxon>Bacillota</taxon>
        <taxon>Clostridia</taxon>
        <taxon>Peptostreptococcales</taxon>
        <taxon>Peptostreptococcaceae</taxon>
        <taxon>Clostridioides</taxon>
    </lineage>
</organism>
<keyword id="KW-0378">Hydrolase</keyword>
<keyword id="KW-0479">Metal-binding</keyword>
<keyword id="KW-0482">Metalloprotease</keyword>
<keyword id="KW-0645">Protease</keyword>
<keyword id="KW-1185">Reference proteome</keyword>
<keyword id="KW-0862">Zinc</keyword>
<gene>
    <name type="ordered locus">CD630_11440</name>
</gene>
<evidence type="ECO:0000255" key="1">
    <source>
        <dbReference type="PROSITE-ProRule" id="PRU01182"/>
    </source>
</evidence>
<evidence type="ECO:0000305" key="2"/>
<name>Y1144_CLOD6</name>
<reference key="1">
    <citation type="journal article" date="2006" name="Nat. Genet.">
        <title>The multidrug-resistant human pathogen Clostridium difficile has a highly mobile, mosaic genome.</title>
        <authorList>
            <person name="Sebaihia M."/>
            <person name="Wren B.W."/>
            <person name="Mullany P."/>
            <person name="Fairweather N.F."/>
            <person name="Minton N."/>
            <person name="Stabler R."/>
            <person name="Thomson N.R."/>
            <person name="Roberts A.P."/>
            <person name="Cerdeno-Tarraga A.M."/>
            <person name="Wang H."/>
            <person name="Holden M.T.G."/>
            <person name="Wright A."/>
            <person name="Churcher C."/>
            <person name="Quail M.A."/>
            <person name="Baker S."/>
            <person name="Bason N."/>
            <person name="Brooks K."/>
            <person name="Chillingworth T."/>
            <person name="Cronin A."/>
            <person name="Davis P."/>
            <person name="Dowd L."/>
            <person name="Fraser A."/>
            <person name="Feltwell T."/>
            <person name="Hance Z."/>
            <person name="Holroyd S."/>
            <person name="Jagels K."/>
            <person name="Moule S."/>
            <person name="Mungall K."/>
            <person name="Price C."/>
            <person name="Rabbinowitsch E."/>
            <person name="Sharp S."/>
            <person name="Simmonds M."/>
            <person name="Stevens K."/>
            <person name="Unwin L."/>
            <person name="Whithead S."/>
            <person name="Dupuy B."/>
            <person name="Dougan G."/>
            <person name="Barrell B."/>
            <person name="Parkhill J."/>
        </authorList>
    </citation>
    <scope>NUCLEOTIDE SEQUENCE [LARGE SCALE GENOMIC DNA]</scope>
    <source>
        <strain>630</strain>
    </source>
</reference>
<sequence length="235" mass="26690">MIYLKKSFNSTIKVKEMAPEERPREKMLAKGVKSLSNAELLAILLRTGNKNKNAIELANYIINRDIQGIRHLEDMTIEELCNIDGIGLSKSTQIKAALELGSRVASFKPIKYKIMNPWDIQRYYMDSLRYLKKEVFKAVLLNTKNEIISDVDVSIGTLSSSLVHPREVFKEAIRRSASKIIVMHNHPSGSVEPSREDKNITSRLIKCGEIIGIEIIDHIIIGDGLYFSFKENMII</sequence>
<dbReference type="EMBL" id="AM180355">
    <property type="protein sequence ID" value="CAJ67997.1"/>
    <property type="molecule type" value="Genomic_DNA"/>
</dbReference>
<dbReference type="RefSeq" id="YP_001087636.1">
    <property type="nucleotide sequence ID" value="NC_009089.1"/>
</dbReference>
<dbReference type="SMR" id="Q18B06"/>
<dbReference type="STRING" id="272563.CD630_11440"/>
<dbReference type="EnsemblBacteria" id="CAJ67997">
    <property type="protein sequence ID" value="CAJ67997"/>
    <property type="gene ID" value="CD630_11440"/>
</dbReference>
<dbReference type="KEGG" id="cdf:CD630_11440"/>
<dbReference type="KEGG" id="pdc:CDIF630_01291"/>
<dbReference type="PATRIC" id="fig|272563.120.peg.1193"/>
<dbReference type="eggNOG" id="COG2003">
    <property type="taxonomic scope" value="Bacteria"/>
</dbReference>
<dbReference type="OrthoDB" id="9804482at2"/>
<dbReference type="PhylomeDB" id="Q18B06"/>
<dbReference type="BioCyc" id="PDIF272563:G12WB-1274-MONOMER"/>
<dbReference type="Proteomes" id="UP000001978">
    <property type="component" value="Chromosome"/>
</dbReference>
<dbReference type="GO" id="GO:0046872">
    <property type="term" value="F:metal ion binding"/>
    <property type="evidence" value="ECO:0007669"/>
    <property type="project" value="UniProtKB-KW"/>
</dbReference>
<dbReference type="GO" id="GO:0008237">
    <property type="term" value="F:metallopeptidase activity"/>
    <property type="evidence" value="ECO:0007669"/>
    <property type="project" value="UniProtKB-KW"/>
</dbReference>
<dbReference type="GO" id="GO:0006508">
    <property type="term" value="P:proteolysis"/>
    <property type="evidence" value="ECO:0007669"/>
    <property type="project" value="UniProtKB-KW"/>
</dbReference>
<dbReference type="CDD" id="cd08071">
    <property type="entry name" value="MPN_DUF2466"/>
    <property type="match status" value="1"/>
</dbReference>
<dbReference type="Gene3D" id="3.40.140.10">
    <property type="entry name" value="Cytidine Deaminase, domain 2"/>
    <property type="match status" value="1"/>
</dbReference>
<dbReference type="InterPro" id="IPR037518">
    <property type="entry name" value="MPN"/>
</dbReference>
<dbReference type="InterPro" id="IPR025657">
    <property type="entry name" value="RadC_JAB"/>
</dbReference>
<dbReference type="InterPro" id="IPR001405">
    <property type="entry name" value="UPF0758"/>
</dbReference>
<dbReference type="InterPro" id="IPR020891">
    <property type="entry name" value="UPF0758_CS"/>
</dbReference>
<dbReference type="InterPro" id="IPR046778">
    <property type="entry name" value="UPF0758_N"/>
</dbReference>
<dbReference type="NCBIfam" id="NF000642">
    <property type="entry name" value="PRK00024.1"/>
    <property type="match status" value="1"/>
</dbReference>
<dbReference type="NCBIfam" id="TIGR00608">
    <property type="entry name" value="radc"/>
    <property type="match status" value="1"/>
</dbReference>
<dbReference type="PANTHER" id="PTHR30471">
    <property type="entry name" value="DNA REPAIR PROTEIN RADC"/>
    <property type="match status" value="1"/>
</dbReference>
<dbReference type="PANTHER" id="PTHR30471:SF3">
    <property type="entry name" value="UPF0758 PROTEIN YEES-RELATED"/>
    <property type="match status" value="1"/>
</dbReference>
<dbReference type="Pfam" id="PF04002">
    <property type="entry name" value="RadC"/>
    <property type="match status" value="1"/>
</dbReference>
<dbReference type="Pfam" id="PF20582">
    <property type="entry name" value="UPF0758_N"/>
    <property type="match status" value="1"/>
</dbReference>
<dbReference type="PROSITE" id="PS50249">
    <property type="entry name" value="MPN"/>
    <property type="match status" value="1"/>
</dbReference>
<dbReference type="PROSITE" id="PS01302">
    <property type="entry name" value="UPF0758"/>
    <property type="match status" value="1"/>
</dbReference>
<proteinExistence type="inferred from homology"/>
<comment type="similarity">
    <text evidence="2">Belongs to the UPF0758 family.</text>
</comment>
<accession>Q18B06</accession>
<protein>
    <recommendedName>
        <fullName>UPF0758 protein CD630_11440</fullName>
    </recommendedName>
</protein>
<feature type="chain" id="PRO_0000322683" description="UPF0758 protein CD630_11440">
    <location>
        <begin position="1"/>
        <end position="235"/>
    </location>
</feature>
<feature type="domain" description="MPN" evidence="1">
    <location>
        <begin position="113"/>
        <end position="235"/>
    </location>
</feature>
<feature type="short sequence motif" description="JAMM motif" evidence="1">
    <location>
        <begin position="184"/>
        <end position="197"/>
    </location>
</feature>
<feature type="binding site" evidence="1">
    <location>
        <position position="184"/>
    </location>
    <ligand>
        <name>Zn(2+)</name>
        <dbReference type="ChEBI" id="CHEBI:29105"/>
        <note>catalytic</note>
    </ligand>
</feature>
<feature type="binding site" evidence="1">
    <location>
        <position position="186"/>
    </location>
    <ligand>
        <name>Zn(2+)</name>
        <dbReference type="ChEBI" id="CHEBI:29105"/>
        <note>catalytic</note>
    </ligand>
</feature>
<feature type="binding site" evidence="1">
    <location>
        <position position="197"/>
    </location>
    <ligand>
        <name>Zn(2+)</name>
        <dbReference type="ChEBI" id="CHEBI:29105"/>
        <note>catalytic</note>
    </ligand>
</feature>